<gene>
    <name type="ORF">SPBC13G1.02</name>
</gene>
<accession>O60064</accession>
<reference key="1">
    <citation type="journal article" date="2002" name="Nature">
        <title>The genome sequence of Schizosaccharomyces pombe.</title>
        <authorList>
            <person name="Wood V."/>
            <person name="Gwilliam R."/>
            <person name="Rajandream M.A."/>
            <person name="Lyne M.H."/>
            <person name="Lyne R."/>
            <person name="Stewart A."/>
            <person name="Sgouros J.G."/>
            <person name="Peat N."/>
            <person name="Hayles J."/>
            <person name="Baker S.G."/>
            <person name="Basham D."/>
            <person name="Bowman S."/>
            <person name="Brooks K."/>
            <person name="Brown D."/>
            <person name="Brown S."/>
            <person name="Chillingworth T."/>
            <person name="Churcher C.M."/>
            <person name="Collins M."/>
            <person name="Connor R."/>
            <person name="Cronin A."/>
            <person name="Davis P."/>
            <person name="Feltwell T."/>
            <person name="Fraser A."/>
            <person name="Gentles S."/>
            <person name="Goble A."/>
            <person name="Hamlin N."/>
            <person name="Harris D.E."/>
            <person name="Hidalgo J."/>
            <person name="Hodgson G."/>
            <person name="Holroyd S."/>
            <person name="Hornsby T."/>
            <person name="Howarth S."/>
            <person name="Huckle E.J."/>
            <person name="Hunt S."/>
            <person name="Jagels K."/>
            <person name="James K.D."/>
            <person name="Jones L."/>
            <person name="Jones M."/>
            <person name="Leather S."/>
            <person name="McDonald S."/>
            <person name="McLean J."/>
            <person name="Mooney P."/>
            <person name="Moule S."/>
            <person name="Mungall K.L."/>
            <person name="Murphy L.D."/>
            <person name="Niblett D."/>
            <person name="Odell C."/>
            <person name="Oliver K."/>
            <person name="O'Neil S."/>
            <person name="Pearson D."/>
            <person name="Quail M.A."/>
            <person name="Rabbinowitsch E."/>
            <person name="Rutherford K.M."/>
            <person name="Rutter S."/>
            <person name="Saunders D."/>
            <person name="Seeger K."/>
            <person name="Sharp S."/>
            <person name="Skelton J."/>
            <person name="Simmonds M.N."/>
            <person name="Squares R."/>
            <person name="Squares S."/>
            <person name="Stevens K."/>
            <person name="Taylor K."/>
            <person name="Taylor R.G."/>
            <person name="Tivey A."/>
            <person name="Walsh S.V."/>
            <person name="Warren T."/>
            <person name="Whitehead S."/>
            <person name="Woodward J.R."/>
            <person name="Volckaert G."/>
            <person name="Aert R."/>
            <person name="Robben J."/>
            <person name="Grymonprez B."/>
            <person name="Weltjens I."/>
            <person name="Vanstreels E."/>
            <person name="Rieger M."/>
            <person name="Schaefer M."/>
            <person name="Mueller-Auer S."/>
            <person name="Gabel C."/>
            <person name="Fuchs M."/>
            <person name="Duesterhoeft A."/>
            <person name="Fritzc C."/>
            <person name="Holzer E."/>
            <person name="Moestl D."/>
            <person name="Hilbert H."/>
            <person name="Borzym K."/>
            <person name="Langer I."/>
            <person name="Beck A."/>
            <person name="Lehrach H."/>
            <person name="Reinhardt R."/>
            <person name="Pohl T.M."/>
            <person name="Eger P."/>
            <person name="Zimmermann W."/>
            <person name="Wedler H."/>
            <person name="Wambutt R."/>
            <person name="Purnelle B."/>
            <person name="Goffeau A."/>
            <person name="Cadieu E."/>
            <person name="Dreano S."/>
            <person name="Gloux S."/>
            <person name="Lelaure V."/>
            <person name="Mottier S."/>
            <person name="Galibert F."/>
            <person name="Aves S.J."/>
            <person name="Xiang Z."/>
            <person name="Hunt C."/>
            <person name="Moore K."/>
            <person name="Hurst S.M."/>
            <person name="Lucas M."/>
            <person name="Rochet M."/>
            <person name="Gaillardin C."/>
            <person name="Tallada V.A."/>
            <person name="Garzon A."/>
            <person name="Thode G."/>
            <person name="Daga R.R."/>
            <person name="Cruzado L."/>
            <person name="Jimenez J."/>
            <person name="Sanchez M."/>
            <person name="del Rey F."/>
            <person name="Benito J."/>
            <person name="Dominguez A."/>
            <person name="Revuelta J.L."/>
            <person name="Moreno S."/>
            <person name="Armstrong J."/>
            <person name="Forsburg S.L."/>
            <person name="Cerutti L."/>
            <person name="Lowe T."/>
            <person name="McCombie W.R."/>
            <person name="Paulsen I."/>
            <person name="Potashkin J."/>
            <person name="Shpakovski G.V."/>
            <person name="Ussery D."/>
            <person name="Barrell B.G."/>
            <person name="Nurse P."/>
        </authorList>
    </citation>
    <scope>NUCLEOTIDE SEQUENCE [LARGE SCALE GENOMIC DNA]</scope>
    <source>
        <strain>972 / ATCC 24843</strain>
    </source>
</reference>
<reference key="2">
    <citation type="journal article" date="2006" name="Nat. Biotechnol.">
        <title>ORFeome cloning and global analysis of protein localization in the fission yeast Schizosaccharomyces pombe.</title>
        <authorList>
            <person name="Matsuyama A."/>
            <person name="Arai R."/>
            <person name="Yashiroda Y."/>
            <person name="Shirai A."/>
            <person name="Kamata A."/>
            <person name="Sekido S."/>
            <person name="Kobayashi Y."/>
            <person name="Hashimoto A."/>
            <person name="Hamamoto M."/>
            <person name="Hiraoka Y."/>
            <person name="Horinouchi S."/>
            <person name="Yoshida M."/>
        </authorList>
    </citation>
    <scope>SUBCELLULAR LOCATION [LARGE SCALE ANALYSIS]</scope>
</reference>
<sequence>MISSAVILVGGPSRGTRFRPLSFDVPKPLFKIGGREMIYHHLAALSKIESVKDVFLVGFYDESVFKDFINEVASHFPSFNRIKYLREYNCLGTGGGLYHFRDQILKGHTSNVFVMHADVCCSFPLQELLNVHHEKKALVTLMATKVSKEDASNFGCLVEEPSTGRVLHYVDKPSSYLSNIISCGIYIFDASIFDEIKKAYERRLEEVEKQLRSLDEGMEDYLSLETDVLAPLCSDSSKAIYAYNTPEFWRQIKTAGSAVPANSLYLQKAYHDGTLPKPDTEAEIIQPVFIHPNAIVSKGAKIGPNVSIGARVRIEDGARIRNSIIQEDCEISANAVVLHSILSRHCKIGKWSRVEGSPTLPSQHSTTIMRNSVKVQAITVMGADCIVHDEVRVQNCLVLPHKEIKVGLVGEIVM</sequence>
<dbReference type="EC" id="2.7.7.13"/>
<dbReference type="EMBL" id="CU329671">
    <property type="protein sequence ID" value="CAA18655.1"/>
    <property type="molecule type" value="Genomic_DNA"/>
</dbReference>
<dbReference type="PIR" id="T39403">
    <property type="entry name" value="T39403"/>
</dbReference>
<dbReference type="SMR" id="O60064"/>
<dbReference type="BioGRID" id="276303">
    <property type="interactions" value="5"/>
</dbReference>
<dbReference type="FunCoup" id="O60064">
    <property type="interactions" value="553"/>
</dbReference>
<dbReference type="STRING" id="284812.O60064"/>
<dbReference type="iPTMnet" id="O60064"/>
<dbReference type="PaxDb" id="4896-SPBC13G1.02.1"/>
<dbReference type="EnsemblFungi" id="SPBC13G1.02.1">
    <property type="protein sequence ID" value="SPBC13G1.02.1:pep"/>
    <property type="gene ID" value="SPBC13G1.02"/>
</dbReference>
<dbReference type="KEGG" id="spo:2539751"/>
<dbReference type="PomBase" id="SPBC13G1.02"/>
<dbReference type="VEuPathDB" id="FungiDB:SPBC13G1.02"/>
<dbReference type="eggNOG" id="KOG1460">
    <property type="taxonomic scope" value="Eukaryota"/>
</dbReference>
<dbReference type="HOGENOM" id="CLU_029499_3_0_1"/>
<dbReference type="InParanoid" id="O60064"/>
<dbReference type="OMA" id="MPVPNWW"/>
<dbReference type="PhylomeDB" id="O60064"/>
<dbReference type="Reactome" id="R-SPO-446205">
    <property type="pathway name" value="Synthesis of GDP-mannose"/>
</dbReference>
<dbReference type="UniPathway" id="UPA00126">
    <property type="reaction ID" value="UER00930"/>
</dbReference>
<dbReference type="PRO" id="PR:O60064"/>
<dbReference type="Proteomes" id="UP000002485">
    <property type="component" value="Chromosome II"/>
</dbReference>
<dbReference type="GO" id="GO:0005737">
    <property type="term" value="C:cytoplasm"/>
    <property type="evidence" value="ECO:0000318"/>
    <property type="project" value="GO_Central"/>
</dbReference>
<dbReference type="GO" id="GO:0005829">
    <property type="term" value="C:cytosol"/>
    <property type="evidence" value="ECO:0007005"/>
    <property type="project" value="PomBase"/>
</dbReference>
<dbReference type="GO" id="GO:0005634">
    <property type="term" value="C:nucleus"/>
    <property type="evidence" value="ECO:0007005"/>
    <property type="project" value="PomBase"/>
</dbReference>
<dbReference type="GO" id="GO:0005525">
    <property type="term" value="F:GTP binding"/>
    <property type="evidence" value="ECO:0007669"/>
    <property type="project" value="UniProtKB-KW"/>
</dbReference>
<dbReference type="GO" id="GO:0004475">
    <property type="term" value="F:mannose-1-phosphate guanylyltransferase (GTP) activity"/>
    <property type="evidence" value="ECO:0000250"/>
    <property type="project" value="PomBase"/>
</dbReference>
<dbReference type="GO" id="GO:0009298">
    <property type="term" value="P:GDP-mannose biosynthetic process"/>
    <property type="evidence" value="ECO:0000305"/>
    <property type="project" value="PomBase"/>
</dbReference>
<dbReference type="CDD" id="cd06428">
    <property type="entry name" value="M1P_guanylylT_A_like_N"/>
    <property type="match status" value="1"/>
</dbReference>
<dbReference type="Gene3D" id="2.160.10.10">
    <property type="entry name" value="Hexapeptide repeat proteins"/>
    <property type="match status" value="1"/>
</dbReference>
<dbReference type="Gene3D" id="3.90.550.10">
    <property type="entry name" value="Spore Coat Polysaccharide Biosynthesis Protein SpsA, Chain A"/>
    <property type="match status" value="1"/>
</dbReference>
<dbReference type="InterPro" id="IPR056729">
    <property type="entry name" value="GMPPB_C"/>
</dbReference>
<dbReference type="InterPro" id="IPR050486">
    <property type="entry name" value="Mannose-1P_guanyltransferase"/>
</dbReference>
<dbReference type="InterPro" id="IPR005835">
    <property type="entry name" value="NTP_transferase_dom"/>
</dbReference>
<dbReference type="InterPro" id="IPR029044">
    <property type="entry name" value="Nucleotide-diphossugar_trans"/>
</dbReference>
<dbReference type="InterPro" id="IPR011004">
    <property type="entry name" value="Trimer_LpxA-like_sf"/>
</dbReference>
<dbReference type="PANTHER" id="PTHR22572">
    <property type="entry name" value="SUGAR-1-PHOSPHATE GUANYL TRANSFERASE"/>
    <property type="match status" value="1"/>
</dbReference>
<dbReference type="Pfam" id="PF25087">
    <property type="entry name" value="GMPPB_C"/>
    <property type="match status" value="1"/>
</dbReference>
<dbReference type="Pfam" id="PF00483">
    <property type="entry name" value="NTP_transferase"/>
    <property type="match status" value="1"/>
</dbReference>
<dbReference type="SUPFAM" id="SSF53448">
    <property type="entry name" value="Nucleotide-diphospho-sugar transferases"/>
    <property type="match status" value="1"/>
</dbReference>
<dbReference type="SUPFAM" id="SSF51161">
    <property type="entry name" value="Trimeric LpxA-like enzymes"/>
    <property type="match status" value="1"/>
</dbReference>
<comment type="function">
    <text evidence="1">Involved in cell wall synthesis where it is required for glycosylation.</text>
</comment>
<comment type="catalytic activity">
    <reaction>
        <text>alpha-D-mannose 1-phosphate + GTP + H(+) = GDP-alpha-D-mannose + diphosphate</text>
        <dbReference type="Rhea" id="RHEA:15229"/>
        <dbReference type="ChEBI" id="CHEBI:15378"/>
        <dbReference type="ChEBI" id="CHEBI:33019"/>
        <dbReference type="ChEBI" id="CHEBI:37565"/>
        <dbReference type="ChEBI" id="CHEBI:57527"/>
        <dbReference type="ChEBI" id="CHEBI:58409"/>
        <dbReference type="EC" id="2.7.7.13"/>
    </reaction>
</comment>
<comment type="pathway">
    <text>Nucleotide-sugar biosynthesis; GDP-alpha-D-mannose biosynthesis; GDP-alpha-D-mannose from alpha-D-mannose 1-phosphate (GTP route): step 1/1.</text>
</comment>
<comment type="subcellular location">
    <subcellularLocation>
        <location evidence="2">Cytoplasm</location>
    </subcellularLocation>
    <subcellularLocation>
        <location evidence="2">Nucleus</location>
    </subcellularLocation>
</comment>
<comment type="similarity">
    <text evidence="3">Belongs to the transferase hexapeptide repeat family.</text>
</comment>
<feature type="chain" id="PRO_0000311772" description="Probable mannose-1-phosphate guanyltransferase">
    <location>
        <begin position="1"/>
        <end position="414"/>
    </location>
</feature>
<organism>
    <name type="scientific">Schizosaccharomyces pombe (strain 972 / ATCC 24843)</name>
    <name type="common">Fission yeast</name>
    <dbReference type="NCBI Taxonomy" id="284812"/>
    <lineage>
        <taxon>Eukaryota</taxon>
        <taxon>Fungi</taxon>
        <taxon>Dikarya</taxon>
        <taxon>Ascomycota</taxon>
        <taxon>Taphrinomycotina</taxon>
        <taxon>Schizosaccharomycetes</taxon>
        <taxon>Schizosaccharomycetales</taxon>
        <taxon>Schizosaccharomycetaceae</taxon>
        <taxon>Schizosaccharomyces</taxon>
    </lineage>
</organism>
<keyword id="KW-0963">Cytoplasm</keyword>
<keyword id="KW-0342">GTP-binding</keyword>
<keyword id="KW-0547">Nucleotide-binding</keyword>
<keyword id="KW-0548">Nucleotidyltransferase</keyword>
<keyword id="KW-0539">Nucleus</keyword>
<keyword id="KW-1185">Reference proteome</keyword>
<keyword id="KW-0808">Transferase</keyword>
<name>YBB2_SCHPO</name>
<evidence type="ECO:0000250" key="1"/>
<evidence type="ECO:0000269" key="2">
    <source>
    </source>
</evidence>
<evidence type="ECO:0000305" key="3"/>
<proteinExistence type="inferred from homology"/>
<protein>
    <recommendedName>
        <fullName>Probable mannose-1-phosphate guanyltransferase</fullName>
        <ecNumber>2.7.7.13</ecNumber>
    </recommendedName>
    <alternativeName>
        <fullName>GDP-mannose pyrophosphorylase</fullName>
    </alternativeName>
    <alternativeName>
        <fullName>GTP-mannose-1-phosphate guanylyltransferase</fullName>
    </alternativeName>
</protein>